<keyword id="KW-0414">Isoprene biosynthesis</keyword>
<keyword id="KW-0464">Manganese</keyword>
<keyword id="KW-0479">Metal-binding</keyword>
<keyword id="KW-0521">NADP</keyword>
<keyword id="KW-0560">Oxidoreductase</keyword>
<keyword id="KW-1185">Reference proteome</keyword>
<comment type="function">
    <text evidence="1">Catalyzes the NADPH-dependent rearrangement and reduction of 1-deoxy-D-xylulose-5-phosphate (DXP) to 2-C-methyl-D-erythritol 4-phosphate (MEP).</text>
</comment>
<comment type="catalytic activity">
    <reaction evidence="1">
        <text>2-C-methyl-D-erythritol 4-phosphate + NADP(+) = 1-deoxy-D-xylulose 5-phosphate + NADPH + H(+)</text>
        <dbReference type="Rhea" id="RHEA:13717"/>
        <dbReference type="ChEBI" id="CHEBI:15378"/>
        <dbReference type="ChEBI" id="CHEBI:57783"/>
        <dbReference type="ChEBI" id="CHEBI:57792"/>
        <dbReference type="ChEBI" id="CHEBI:58262"/>
        <dbReference type="ChEBI" id="CHEBI:58349"/>
        <dbReference type="EC" id="1.1.1.267"/>
    </reaction>
    <physiologicalReaction direction="right-to-left" evidence="1">
        <dbReference type="Rhea" id="RHEA:13719"/>
    </physiologicalReaction>
</comment>
<comment type="cofactor">
    <cofactor evidence="1">
        <name>Mg(2+)</name>
        <dbReference type="ChEBI" id="CHEBI:18420"/>
    </cofactor>
    <cofactor evidence="1">
        <name>Mn(2+)</name>
        <dbReference type="ChEBI" id="CHEBI:29035"/>
    </cofactor>
</comment>
<comment type="pathway">
    <text evidence="1">Isoprenoid biosynthesis; isopentenyl diphosphate biosynthesis via DXP pathway; isopentenyl diphosphate from 1-deoxy-D-xylulose 5-phosphate: step 1/6.</text>
</comment>
<comment type="similarity">
    <text evidence="1">Belongs to the DXR family.</text>
</comment>
<evidence type="ECO:0000255" key="1">
    <source>
        <dbReference type="HAMAP-Rule" id="MF_00183"/>
    </source>
</evidence>
<proteinExistence type="inferred from homology"/>
<sequence>MSVRRVVILGSTGSIGMQALEVVAANPDRFQVVGLTAGSSAGQLAEQAERFGVRETALGAGDSERLVRSVDADVVLNGITGSVGLGPTLAALESGRTLALANKESLIVGGELVKRAAAPGQLIPVDSEHSALAQALRSGAAGEVSRLVLTASGGPFRGRSRESLRQVTPAEALAHPTWDMGLVVTTNSSTLVNKGLEVIEAHLLFGVPYDRIEVTVHPQSVVHSMVEFVDGSTIAQASPPDMRLPISLGLGWPDRVPGTGLPLDWTRAHTWTFEPLDGEAFPAVALAKCVGVAGGTYPAVFNAANEQAVAAFHAGAIGYLDIVDTVERVVDAHEPQAELTREGLAEAEGWARSAADRMLGR</sequence>
<name>DXR_LEIXX</name>
<organism>
    <name type="scientific">Leifsonia xyli subsp. xyli (strain CTCB07)</name>
    <dbReference type="NCBI Taxonomy" id="281090"/>
    <lineage>
        <taxon>Bacteria</taxon>
        <taxon>Bacillati</taxon>
        <taxon>Actinomycetota</taxon>
        <taxon>Actinomycetes</taxon>
        <taxon>Micrococcales</taxon>
        <taxon>Microbacteriaceae</taxon>
        <taxon>Leifsonia</taxon>
    </lineage>
</organism>
<gene>
    <name evidence="1" type="primary">dxr</name>
    <name type="ordered locus">Lxx12180</name>
</gene>
<feature type="chain" id="PRO_0000163667" description="1-deoxy-D-xylulose 5-phosphate reductoisomerase">
    <location>
        <begin position="1"/>
        <end position="361"/>
    </location>
</feature>
<feature type="binding site" evidence="1">
    <location>
        <position position="12"/>
    </location>
    <ligand>
        <name>NADPH</name>
        <dbReference type="ChEBI" id="CHEBI:57783"/>
    </ligand>
</feature>
<feature type="binding site" evidence="1">
    <location>
        <position position="13"/>
    </location>
    <ligand>
        <name>NADPH</name>
        <dbReference type="ChEBI" id="CHEBI:57783"/>
    </ligand>
</feature>
<feature type="binding site" evidence="1">
    <location>
        <position position="14"/>
    </location>
    <ligand>
        <name>NADPH</name>
        <dbReference type="ChEBI" id="CHEBI:57783"/>
    </ligand>
</feature>
<feature type="binding site" evidence="1">
    <location>
        <position position="15"/>
    </location>
    <ligand>
        <name>NADPH</name>
        <dbReference type="ChEBI" id="CHEBI:57783"/>
    </ligand>
</feature>
<feature type="binding site" evidence="1">
    <location>
        <position position="38"/>
    </location>
    <ligand>
        <name>NADPH</name>
        <dbReference type="ChEBI" id="CHEBI:57783"/>
    </ligand>
</feature>
<feature type="binding site" evidence="1">
    <location>
        <position position="102"/>
    </location>
    <ligand>
        <name>NADPH</name>
        <dbReference type="ChEBI" id="CHEBI:57783"/>
    </ligand>
</feature>
<feature type="binding site" evidence="1">
    <location>
        <position position="103"/>
    </location>
    <ligand>
        <name>1-deoxy-D-xylulose 5-phosphate</name>
        <dbReference type="ChEBI" id="CHEBI:57792"/>
    </ligand>
</feature>
<feature type="binding site" evidence="1">
    <location>
        <position position="104"/>
    </location>
    <ligand>
        <name>NADPH</name>
        <dbReference type="ChEBI" id="CHEBI:57783"/>
    </ligand>
</feature>
<feature type="binding site" evidence="1">
    <location>
        <position position="126"/>
    </location>
    <ligand>
        <name>Mn(2+)</name>
        <dbReference type="ChEBI" id="CHEBI:29035"/>
    </ligand>
</feature>
<feature type="binding site" evidence="1">
    <location>
        <position position="127"/>
    </location>
    <ligand>
        <name>1-deoxy-D-xylulose 5-phosphate</name>
        <dbReference type="ChEBI" id="CHEBI:57792"/>
    </ligand>
</feature>
<feature type="binding site" evidence="1">
    <location>
        <position position="128"/>
    </location>
    <ligand>
        <name>1-deoxy-D-xylulose 5-phosphate</name>
        <dbReference type="ChEBI" id="CHEBI:57792"/>
    </ligand>
</feature>
<feature type="binding site" evidence="1">
    <location>
        <position position="128"/>
    </location>
    <ligand>
        <name>Mn(2+)</name>
        <dbReference type="ChEBI" id="CHEBI:29035"/>
    </ligand>
</feature>
<feature type="binding site" evidence="1">
    <location>
        <position position="152"/>
    </location>
    <ligand>
        <name>1-deoxy-D-xylulose 5-phosphate</name>
        <dbReference type="ChEBI" id="CHEBI:57792"/>
    </ligand>
</feature>
<feature type="binding site" evidence="1">
    <location>
        <position position="175"/>
    </location>
    <ligand>
        <name>1-deoxy-D-xylulose 5-phosphate</name>
        <dbReference type="ChEBI" id="CHEBI:57792"/>
    </ligand>
</feature>
<feature type="binding site" evidence="1">
    <location>
        <position position="181"/>
    </location>
    <ligand>
        <name>NADPH</name>
        <dbReference type="ChEBI" id="CHEBI:57783"/>
    </ligand>
</feature>
<feature type="binding site" evidence="1">
    <location>
        <position position="188"/>
    </location>
    <ligand>
        <name>1-deoxy-D-xylulose 5-phosphate</name>
        <dbReference type="ChEBI" id="CHEBI:57792"/>
    </ligand>
</feature>
<feature type="binding site" evidence="1">
    <location>
        <position position="193"/>
    </location>
    <ligand>
        <name>1-deoxy-D-xylulose 5-phosphate</name>
        <dbReference type="ChEBI" id="CHEBI:57792"/>
    </ligand>
</feature>
<feature type="binding site" evidence="1">
    <location>
        <position position="194"/>
    </location>
    <ligand>
        <name>1-deoxy-D-xylulose 5-phosphate</name>
        <dbReference type="ChEBI" id="CHEBI:57792"/>
    </ligand>
</feature>
<feature type="binding site" evidence="1">
    <location>
        <position position="197"/>
    </location>
    <ligand>
        <name>1-deoxy-D-xylulose 5-phosphate</name>
        <dbReference type="ChEBI" id="CHEBI:57792"/>
    </ligand>
</feature>
<feature type="binding site" evidence="1">
    <location>
        <position position="197"/>
    </location>
    <ligand>
        <name>Mn(2+)</name>
        <dbReference type="ChEBI" id="CHEBI:29035"/>
    </ligand>
</feature>
<dbReference type="EC" id="1.1.1.267" evidence="1"/>
<dbReference type="EMBL" id="AE016822">
    <property type="protein sequence ID" value="AAT89064.1"/>
    <property type="molecule type" value="Genomic_DNA"/>
</dbReference>
<dbReference type="SMR" id="Q6AEY1"/>
<dbReference type="STRING" id="281090.Lxx12180"/>
<dbReference type="KEGG" id="lxx:Lxx12180"/>
<dbReference type="eggNOG" id="COG0743">
    <property type="taxonomic scope" value="Bacteria"/>
</dbReference>
<dbReference type="HOGENOM" id="CLU_035714_4_0_11"/>
<dbReference type="UniPathway" id="UPA00056">
    <property type="reaction ID" value="UER00092"/>
</dbReference>
<dbReference type="Proteomes" id="UP000001306">
    <property type="component" value="Chromosome"/>
</dbReference>
<dbReference type="GO" id="GO:0030604">
    <property type="term" value="F:1-deoxy-D-xylulose-5-phosphate reductoisomerase activity"/>
    <property type="evidence" value="ECO:0007669"/>
    <property type="project" value="UniProtKB-UniRule"/>
</dbReference>
<dbReference type="GO" id="GO:0030145">
    <property type="term" value="F:manganese ion binding"/>
    <property type="evidence" value="ECO:0007669"/>
    <property type="project" value="TreeGrafter"/>
</dbReference>
<dbReference type="GO" id="GO:0070402">
    <property type="term" value="F:NADPH binding"/>
    <property type="evidence" value="ECO:0007669"/>
    <property type="project" value="InterPro"/>
</dbReference>
<dbReference type="GO" id="GO:0051484">
    <property type="term" value="P:isopentenyl diphosphate biosynthetic process, methylerythritol 4-phosphate pathway involved in terpenoid biosynthetic process"/>
    <property type="evidence" value="ECO:0007669"/>
    <property type="project" value="TreeGrafter"/>
</dbReference>
<dbReference type="Gene3D" id="1.10.1740.10">
    <property type="match status" value="1"/>
</dbReference>
<dbReference type="Gene3D" id="3.40.50.720">
    <property type="entry name" value="NAD(P)-binding Rossmann-like Domain"/>
    <property type="match status" value="2"/>
</dbReference>
<dbReference type="HAMAP" id="MF_00183">
    <property type="entry name" value="DXP_reductoisom"/>
    <property type="match status" value="1"/>
</dbReference>
<dbReference type="InterPro" id="IPR003821">
    <property type="entry name" value="DXP_reductoisomerase"/>
</dbReference>
<dbReference type="InterPro" id="IPR013644">
    <property type="entry name" value="DXP_reductoisomerase_C"/>
</dbReference>
<dbReference type="InterPro" id="IPR013512">
    <property type="entry name" value="DXP_reductoisomerase_N"/>
</dbReference>
<dbReference type="InterPro" id="IPR026877">
    <property type="entry name" value="DXPR_C"/>
</dbReference>
<dbReference type="InterPro" id="IPR036169">
    <property type="entry name" value="DXPR_C_sf"/>
</dbReference>
<dbReference type="InterPro" id="IPR036291">
    <property type="entry name" value="NAD(P)-bd_dom_sf"/>
</dbReference>
<dbReference type="PANTHER" id="PTHR30525">
    <property type="entry name" value="1-DEOXY-D-XYLULOSE 5-PHOSPHATE REDUCTOISOMERASE"/>
    <property type="match status" value="1"/>
</dbReference>
<dbReference type="PANTHER" id="PTHR30525:SF0">
    <property type="entry name" value="1-DEOXY-D-XYLULOSE 5-PHOSPHATE REDUCTOISOMERASE, CHLOROPLASTIC"/>
    <property type="match status" value="1"/>
</dbReference>
<dbReference type="Pfam" id="PF08436">
    <property type="entry name" value="DXP_redisom_C"/>
    <property type="match status" value="1"/>
</dbReference>
<dbReference type="Pfam" id="PF02670">
    <property type="entry name" value="DXP_reductoisom"/>
    <property type="match status" value="2"/>
</dbReference>
<dbReference type="Pfam" id="PF13288">
    <property type="entry name" value="DXPR_C"/>
    <property type="match status" value="1"/>
</dbReference>
<dbReference type="PIRSF" id="PIRSF006205">
    <property type="entry name" value="Dxp_reductismrs"/>
    <property type="match status" value="1"/>
</dbReference>
<dbReference type="SUPFAM" id="SSF69055">
    <property type="entry name" value="1-deoxy-D-xylulose-5-phosphate reductoisomerase, C-terminal domain"/>
    <property type="match status" value="1"/>
</dbReference>
<dbReference type="SUPFAM" id="SSF55347">
    <property type="entry name" value="Glyceraldehyde-3-phosphate dehydrogenase-like, C-terminal domain"/>
    <property type="match status" value="1"/>
</dbReference>
<dbReference type="SUPFAM" id="SSF51735">
    <property type="entry name" value="NAD(P)-binding Rossmann-fold domains"/>
    <property type="match status" value="1"/>
</dbReference>
<reference key="1">
    <citation type="journal article" date="2004" name="Mol. Plant Microbe Interact.">
        <title>The genome sequence of the Gram-positive sugarcane pathogen Leifsonia xyli subsp. xyli.</title>
        <authorList>
            <person name="Monteiro-Vitorello C.B."/>
            <person name="Camargo L.E.A."/>
            <person name="Van Sluys M.A."/>
            <person name="Kitajima J.P."/>
            <person name="Truffi D."/>
            <person name="do Amaral A.M."/>
            <person name="Harakava R."/>
            <person name="de Oliveira J.C.F."/>
            <person name="Wood D."/>
            <person name="de Oliveira M.C."/>
            <person name="Miyaki C.Y."/>
            <person name="Takita M.A."/>
            <person name="da Silva A.C.R."/>
            <person name="Furlan L.R."/>
            <person name="Carraro D.M."/>
            <person name="Camarotte G."/>
            <person name="Almeida N.F. Jr."/>
            <person name="Carrer H."/>
            <person name="Coutinho L.L."/>
            <person name="El-Dorry H.A."/>
            <person name="Ferro M.I.T."/>
            <person name="Gagliardi P.R."/>
            <person name="Giglioti E."/>
            <person name="Goldman M.H.S."/>
            <person name="Goldman G.H."/>
            <person name="Kimura E.T."/>
            <person name="Ferro E.S."/>
            <person name="Kuramae E.E."/>
            <person name="Lemos E.G.M."/>
            <person name="Lemos M.V.F."/>
            <person name="Mauro S.M.Z."/>
            <person name="Machado M.A."/>
            <person name="Marino C.L."/>
            <person name="Menck C.F."/>
            <person name="Nunes L.R."/>
            <person name="Oliveira R.C."/>
            <person name="Pereira G.G."/>
            <person name="Siqueira W."/>
            <person name="de Souza A.A."/>
            <person name="Tsai S.M."/>
            <person name="Zanca A.S."/>
            <person name="Simpson A.J.G."/>
            <person name="Brumbley S.M."/>
            <person name="Setubal J.C."/>
        </authorList>
    </citation>
    <scope>NUCLEOTIDE SEQUENCE [LARGE SCALE GENOMIC DNA]</scope>
    <source>
        <strain>CTCB07</strain>
    </source>
</reference>
<accession>Q6AEY1</accession>
<protein>
    <recommendedName>
        <fullName evidence="1">1-deoxy-D-xylulose 5-phosphate reductoisomerase</fullName>
        <shortName evidence="1">DXP reductoisomerase</shortName>
        <ecNumber evidence="1">1.1.1.267</ecNumber>
    </recommendedName>
    <alternativeName>
        <fullName evidence="1">1-deoxyxylulose-5-phosphate reductoisomerase</fullName>
    </alternativeName>
    <alternativeName>
        <fullName evidence="1">2-C-methyl-D-erythritol 4-phosphate synthase</fullName>
    </alternativeName>
</protein>